<keyword id="KW-0143">Chaperone</keyword>
<keyword id="KW-0963">Cytoplasm</keyword>
<keyword id="KW-1015">Disulfide bond</keyword>
<keyword id="KW-0676">Redox-active center</keyword>
<keyword id="KW-0862">Zinc</keyword>
<proteinExistence type="inferred from homology"/>
<name>HSLO_STRP6</name>
<sequence>MDKIIKSIAQSGAFRAYVLDSTETVALAQEKHNTLSSSTVALGRTLIANQILAANQKGDSKITVKVIGDSSFGHIISVADTKGHVKGYIQNTGVDIKKTATGEVLVGPFMGNGHFVTIIDYGTGNPYTSTTPLITGEIGEDFAYYLTESEQTPSAIGLNVLLDENDKVKVAGGFMVQVLPGASEEEIARYEKRLQEMPAISHLLASKNHVDALLEAICGDEPYKRLSEEPLSFQCDCSRERFEAALMTLPKADLQAMIDEDKGAEIVCQFCGTKYQFNESDLEAIINDKA</sequence>
<dbReference type="EMBL" id="CP000003">
    <property type="protein sequence ID" value="AAT86289.1"/>
    <property type="molecule type" value="Genomic_DNA"/>
</dbReference>
<dbReference type="RefSeq" id="WP_011184098.1">
    <property type="nucleotide sequence ID" value="NC_006086.1"/>
</dbReference>
<dbReference type="SMR" id="Q5XE74"/>
<dbReference type="KEGG" id="spa:M6_Spy0154"/>
<dbReference type="HOGENOM" id="CLU_054493_1_0_9"/>
<dbReference type="Proteomes" id="UP000001167">
    <property type="component" value="Chromosome"/>
</dbReference>
<dbReference type="GO" id="GO:0005737">
    <property type="term" value="C:cytoplasm"/>
    <property type="evidence" value="ECO:0007669"/>
    <property type="project" value="UniProtKB-SubCell"/>
</dbReference>
<dbReference type="GO" id="GO:0044183">
    <property type="term" value="F:protein folding chaperone"/>
    <property type="evidence" value="ECO:0007669"/>
    <property type="project" value="TreeGrafter"/>
</dbReference>
<dbReference type="GO" id="GO:0051082">
    <property type="term" value="F:unfolded protein binding"/>
    <property type="evidence" value="ECO:0007669"/>
    <property type="project" value="UniProtKB-UniRule"/>
</dbReference>
<dbReference type="GO" id="GO:0042026">
    <property type="term" value="P:protein refolding"/>
    <property type="evidence" value="ECO:0007669"/>
    <property type="project" value="TreeGrafter"/>
</dbReference>
<dbReference type="CDD" id="cd00498">
    <property type="entry name" value="Hsp33"/>
    <property type="match status" value="1"/>
</dbReference>
<dbReference type="Gene3D" id="3.55.30.10">
    <property type="entry name" value="Hsp33 domain"/>
    <property type="match status" value="1"/>
</dbReference>
<dbReference type="Gene3D" id="3.90.1280.10">
    <property type="entry name" value="HSP33 redox switch-like"/>
    <property type="match status" value="1"/>
</dbReference>
<dbReference type="HAMAP" id="MF_00117">
    <property type="entry name" value="HslO"/>
    <property type="match status" value="1"/>
</dbReference>
<dbReference type="InterPro" id="IPR000397">
    <property type="entry name" value="Heat_shock_Hsp33"/>
</dbReference>
<dbReference type="InterPro" id="IPR016154">
    <property type="entry name" value="Heat_shock_Hsp33_C"/>
</dbReference>
<dbReference type="InterPro" id="IPR016153">
    <property type="entry name" value="Heat_shock_Hsp33_N"/>
</dbReference>
<dbReference type="NCBIfam" id="NF001033">
    <property type="entry name" value="PRK00114.1"/>
    <property type="match status" value="1"/>
</dbReference>
<dbReference type="PANTHER" id="PTHR30111">
    <property type="entry name" value="33 KDA CHAPERONIN"/>
    <property type="match status" value="1"/>
</dbReference>
<dbReference type="PANTHER" id="PTHR30111:SF1">
    <property type="entry name" value="33 KDA CHAPERONIN"/>
    <property type="match status" value="1"/>
</dbReference>
<dbReference type="Pfam" id="PF01430">
    <property type="entry name" value="HSP33"/>
    <property type="match status" value="1"/>
</dbReference>
<dbReference type="PIRSF" id="PIRSF005261">
    <property type="entry name" value="Heat_shock_Hsp33"/>
    <property type="match status" value="1"/>
</dbReference>
<dbReference type="SUPFAM" id="SSF64397">
    <property type="entry name" value="Hsp33 domain"/>
    <property type="match status" value="1"/>
</dbReference>
<dbReference type="SUPFAM" id="SSF118352">
    <property type="entry name" value="HSP33 redox switch-like"/>
    <property type="match status" value="1"/>
</dbReference>
<accession>Q5XE74</accession>
<organism>
    <name type="scientific">Streptococcus pyogenes serotype M6 (strain ATCC BAA-946 / MGAS10394)</name>
    <dbReference type="NCBI Taxonomy" id="286636"/>
    <lineage>
        <taxon>Bacteria</taxon>
        <taxon>Bacillati</taxon>
        <taxon>Bacillota</taxon>
        <taxon>Bacilli</taxon>
        <taxon>Lactobacillales</taxon>
        <taxon>Streptococcaceae</taxon>
        <taxon>Streptococcus</taxon>
    </lineage>
</organism>
<reference key="1">
    <citation type="journal article" date="2004" name="J. Infect. Dis.">
        <title>Progress toward characterization of the group A Streptococcus metagenome: complete genome sequence of a macrolide-resistant serotype M6 strain.</title>
        <authorList>
            <person name="Banks D.J."/>
            <person name="Porcella S.F."/>
            <person name="Barbian K.D."/>
            <person name="Beres S.B."/>
            <person name="Philips L.E."/>
            <person name="Voyich J.M."/>
            <person name="DeLeo F.R."/>
            <person name="Martin J.M."/>
            <person name="Somerville G.A."/>
            <person name="Musser J.M."/>
        </authorList>
    </citation>
    <scope>NUCLEOTIDE SEQUENCE [LARGE SCALE GENOMIC DNA]</scope>
    <source>
        <strain>ATCC BAA-946 / MGAS10394</strain>
    </source>
</reference>
<feature type="chain" id="PRO_0000192214" description="33 kDa chaperonin">
    <location>
        <begin position="1"/>
        <end position="290"/>
    </location>
</feature>
<feature type="disulfide bond" description="Redox-active" evidence="1">
    <location>
        <begin position="235"/>
        <end position="237"/>
    </location>
</feature>
<feature type="disulfide bond" description="Redox-active" evidence="1">
    <location>
        <begin position="268"/>
        <end position="271"/>
    </location>
</feature>
<evidence type="ECO:0000255" key="1">
    <source>
        <dbReference type="HAMAP-Rule" id="MF_00117"/>
    </source>
</evidence>
<protein>
    <recommendedName>
        <fullName evidence="1">33 kDa chaperonin</fullName>
    </recommendedName>
    <alternativeName>
        <fullName evidence="1">Heat shock protein 33 homolog</fullName>
        <shortName evidence="1">HSP33</shortName>
    </alternativeName>
</protein>
<gene>
    <name evidence="1" type="primary">hslO</name>
    <name type="ordered locus">M6_Spy0154</name>
</gene>
<comment type="function">
    <text evidence="1">Redox regulated molecular chaperone. Protects both thermally unfolding and oxidatively damaged proteins from irreversible aggregation. Plays an important role in the bacterial defense system toward oxidative stress.</text>
</comment>
<comment type="subcellular location">
    <subcellularLocation>
        <location evidence="1">Cytoplasm</location>
    </subcellularLocation>
</comment>
<comment type="PTM">
    <text evidence="1">Under oxidizing conditions two disulfide bonds are formed involving the reactive cysteines. Under reducing conditions zinc is bound to the reactive cysteines and the protein is inactive.</text>
</comment>
<comment type="similarity">
    <text evidence="1">Belongs to the HSP33 family.</text>
</comment>